<comment type="function">
    <text evidence="1">Catalyzes the NADPH-dependent rearrangement and reduction of 1-deoxy-D-xylulose-5-phosphate (DXP) to 2-C-methyl-D-erythritol 4-phosphate (MEP).</text>
</comment>
<comment type="catalytic activity">
    <reaction evidence="1">
        <text>2-C-methyl-D-erythritol 4-phosphate + NADP(+) = 1-deoxy-D-xylulose 5-phosphate + NADPH + H(+)</text>
        <dbReference type="Rhea" id="RHEA:13717"/>
        <dbReference type="ChEBI" id="CHEBI:15378"/>
        <dbReference type="ChEBI" id="CHEBI:57783"/>
        <dbReference type="ChEBI" id="CHEBI:57792"/>
        <dbReference type="ChEBI" id="CHEBI:58262"/>
        <dbReference type="ChEBI" id="CHEBI:58349"/>
        <dbReference type="EC" id="1.1.1.267"/>
    </reaction>
    <physiologicalReaction direction="right-to-left" evidence="1">
        <dbReference type="Rhea" id="RHEA:13719"/>
    </physiologicalReaction>
</comment>
<comment type="cofactor">
    <cofactor evidence="1">
        <name>Mg(2+)</name>
        <dbReference type="ChEBI" id="CHEBI:18420"/>
    </cofactor>
    <cofactor evidence="1">
        <name>Mn(2+)</name>
        <dbReference type="ChEBI" id="CHEBI:29035"/>
    </cofactor>
</comment>
<comment type="pathway">
    <text evidence="1">Isoprenoid biosynthesis; isopentenyl diphosphate biosynthesis via DXP pathway; isopentenyl diphosphate from 1-deoxy-D-xylulose 5-phosphate: step 1/6.</text>
</comment>
<comment type="similarity">
    <text evidence="1">Belongs to the DXR family.</text>
</comment>
<accession>Q085D6</accession>
<gene>
    <name evidence="1" type="primary">dxr</name>
    <name type="ordered locus">Sfri_1276</name>
</gene>
<name>DXR_SHEFN</name>
<proteinExistence type="inferred from homology"/>
<feature type="chain" id="PRO_1000020308" description="1-deoxy-D-xylulose 5-phosphate reductoisomerase">
    <location>
        <begin position="1"/>
        <end position="396"/>
    </location>
</feature>
<feature type="binding site" evidence="1">
    <location>
        <position position="10"/>
    </location>
    <ligand>
        <name>NADPH</name>
        <dbReference type="ChEBI" id="CHEBI:57783"/>
    </ligand>
</feature>
<feature type="binding site" evidence="1">
    <location>
        <position position="11"/>
    </location>
    <ligand>
        <name>NADPH</name>
        <dbReference type="ChEBI" id="CHEBI:57783"/>
    </ligand>
</feature>
<feature type="binding site" evidence="1">
    <location>
        <position position="12"/>
    </location>
    <ligand>
        <name>NADPH</name>
        <dbReference type="ChEBI" id="CHEBI:57783"/>
    </ligand>
</feature>
<feature type="binding site" evidence="1">
    <location>
        <position position="13"/>
    </location>
    <ligand>
        <name>NADPH</name>
        <dbReference type="ChEBI" id="CHEBI:57783"/>
    </ligand>
</feature>
<feature type="binding site" evidence="1">
    <location>
        <position position="123"/>
    </location>
    <ligand>
        <name>NADPH</name>
        <dbReference type="ChEBI" id="CHEBI:57783"/>
    </ligand>
</feature>
<feature type="binding site" evidence="1">
    <location>
        <position position="124"/>
    </location>
    <ligand>
        <name>1-deoxy-D-xylulose 5-phosphate</name>
        <dbReference type="ChEBI" id="CHEBI:57792"/>
    </ligand>
</feature>
<feature type="binding site" evidence="1">
    <location>
        <position position="125"/>
    </location>
    <ligand>
        <name>NADPH</name>
        <dbReference type="ChEBI" id="CHEBI:57783"/>
    </ligand>
</feature>
<feature type="binding site" evidence="1">
    <location>
        <position position="149"/>
    </location>
    <ligand>
        <name>Mn(2+)</name>
        <dbReference type="ChEBI" id="CHEBI:29035"/>
    </ligand>
</feature>
<feature type="binding site" evidence="1">
    <location>
        <position position="150"/>
    </location>
    <ligand>
        <name>1-deoxy-D-xylulose 5-phosphate</name>
        <dbReference type="ChEBI" id="CHEBI:57792"/>
    </ligand>
</feature>
<feature type="binding site" evidence="1">
    <location>
        <position position="151"/>
    </location>
    <ligand>
        <name>1-deoxy-D-xylulose 5-phosphate</name>
        <dbReference type="ChEBI" id="CHEBI:57792"/>
    </ligand>
</feature>
<feature type="binding site" evidence="1">
    <location>
        <position position="151"/>
    </location>
    <ligand>
        <name>Mn(2+)</name>
        <dbReference type="ChEBI" id="CHEBI:29035"/>
    </ligand>
</feature>
<feature type="binding site" evidence="1">
    <location>
        <position position="185"/>
    </location>
    <ligand>
        <name>1-deoxy-D-xylulose 5-phosphate</name>
        <dbReference type="ChEBI" id="CHEBI:57792"/>
    </ligand>
</feature>
<feature type="binding site" evidence="1">
    <location>
        <position position="208"/>
    </location>
    <ligand>
        <name>1-deoxy-D-xylulose 5-phosphate</name>
        <dbReference type="ChEBI" id="CHEBI:57792"/>
    </ligand>
</feature>
<feature type="binding site" evidence="1">
    <location>
        <position position="214"/>
    </location>
    <ligand>
        <name>NADPH</name>
        <dbReference type="ChEBI" id="CHEBI:57783"/>
    </ligand>
</feature>
<feature type="binding site" evidence="1">
    <location>
        <position position="221"/>
    </location>
    <ligand>
        <name>1-deoxy-D-xylulose 5-phosphate</name>
        <dbReference type="ChEBI" id="CHEBI:57792"/>
    </ligand>
</feature>
<feature type="binding site" evidence="1">
    <location>
        <position position="226"/>
    </location>
    <ligand>
        <name>1-deoxy-D-xylulose 5-phosphate</name>
        <dbReference type="ChEBI" id="CHEBI:57792"/>
    </ligand>
</feature>
<feature type="binding site" evidence="1">
    <location>
        <position position="227"/>
    </location>
    <ligand>
        <name>1-deoxy-D-xylulose 5-phosphate</name>
        <dbReference type="ChEBI" id="CHEBI:57792"/>
    </ligand>
</feature>
<feature type="binding site" evidence="1">
    <location>
        <position position="230"/>
    </location>
    <ligand>
        <name>1-deoxy-D-xylulose 5-phosphate</name>
        <dbReference type="ChEBI" id="CHEBI:57792"/>
    </ligand>
</feature>
<feature type="binding site" evidence="1">
    <location>
        <position position="230"/>
    </location>
    <ligand>
        <name>Mn(2+)</name>
        <dbReference type="ChEBI" id="CHEBI:29035"/>
    </ligand>
</feature>
<organism>
    <name type="scientific">Shewanella frigidimarina (strain NCIMB 400)</name>
    <dbReference type="NCBI Taxonomy" id="318167"/>
    <lineage>
        <taxon>Bacteria</taxon>
        <taxon>Pseudomonadati</taxon>
        <taxon>Pseudomonadota</taxon>
        <taxon>Gammaproteobacteria</taxon>
        <taxon>Alteromonadales</taxon>
        <taxon>Shewanellaceae</taxon>
        <taxon>Shewanella</taxon>
    </lineage>
</organism>
<dbReference type="EC" id="1.1.1.267" evidence="1"/>
<dbReference type="EMBL" id="CP000447">
    <property type="protein sequence ID" value="ABI71129.1"/>
    <property type="molecule type" value="Genomic_DNA"/>
</dbReference>
<dbReference type="RefSeq" id="WP_011636750.1">
    <property type="nucleotide sequence ID" value="NC_008345.1"/>
</dbReference>
<dbReference type="SMR" id="Q085D6"/>
<dbReference type="STRING" id="318167.Sfri_1276"/>
<dbReference type="KEGG" id="sfr:Sfri_1276"/>
<dbReference type="eggNOG" id="COG0743">
    <property type="taxonomic scope" value="Bacteria"/>
</dbReference>
<dbReference type="HOGENOM" id="CLU_035714_4_0_6"/>
<dbReference type="OrthoDB" id="9806546at2"/>
<dbReference type="UniPathway" id="UPA00056">
    <property type="reaction ID" value="UER00092"/>
</dbReference>
<dbReference type="Proteomes" id="UP000000684">
    <property type="component" value="Chromosome"/>
</dbReference>
<dbReference type="GO" id="GO:0030604">
    <property type="term" value="F:1-deoxy-D-xylulose-5-phosphate reductoisomerase activity"/>
    <property type="evidence" value="ECO:0007669"/>
    <property type="project" value="UniProtKB-UniRule"/>
</dbReference>
<dbReference type="GO" id="GO:0030145">
    <property type="term" value="F:manganese ion binding"/>
    <property type="evidence" value="ECO:0007669"/>
    <property type="project" value="TreeGrafter"/>
</dbReference>
<dbReference type="GO" id="GO:0070402">
    <property type="term" value="F:NADPH binding"/>
    <property type="evidence" value="ECO:0007669"/>
    <property type="project" value="InterPro"/>
</dbReference>
<dbReference type="GO" id="GO:0051484">
    <property type="term" value="P:isopentenyl diphosphate biosynthetic process, methylerythritol 4-phosphate pathway involved in terpenoid biosynthetic process"/>
    <property type="evidence" value="ECO:0007669"/>
    <property type="project" value="TreeGrafter"/>
</dbReference>
<dbReference type="FunFam" id="1.10.1740.10:FF:000004">
    <property type="entry name" value="1-deoxy-D-xylulose 5-phosphate reductoisomerase"/>
    <property type="match status" value="1"/>
</dbReference>
<dbReference type="FunFam" id="3.40.50.720:FF:000045">
    <property type="entry name" value="1-deoxy-D-xylulose 5-phosphate reductoisomerase"/>
    <property type="match status" value="1"/>
</dbReference>
<dbReference type="Gene3D" id="1.10.1740.10">
    <property type="match status" value="1"/>
</dbReference>
<dbReference type="Gene3D" id="3.40.50.720">
    <property type="entry name" value="NAD(P)-binding Rossmann-like Domain"/>
    <property type="match status" value="1"/>
</dbReference>
<dbReference type="HAMAP" id="MF_00183">
    <property type="entry name" value="DXP_reductoisom"/>
    <property type="match status" value="1"/>
</dbReference>
<dbReference type="InterPro" id="IPR003821">
    <property type="entry name" value="DXP_reductoisomerase"/>
</dbReference>
<dbReference type="InterPro" id="IPR013644">
    <property type="entry name" value="DXP_reductoisomerase_C"/>
</dbReference>
<dbReference type="InterPro" id="IPR013512">
    <property type="entry name" value="DXP_reductoisomerase_N"/>
</dbReference>
<dbReference type="InterPro" id="IPR026877">
    <property type="entry name" value="DXPR_C"/>
</dbReference>
<dbReference type="InterPro" id="IPR036169">
    <property type="entry name" value="DXPR_C_sf"/>
</dbReference>
<dbReference type="InterPro" id="IPR036291">
    <property type="entry name" value="NAD(P)-bd_dom_sf"/>
</dbReference>
<dbReference type="NCBIfam" id="TIGR00243">
    <property type="entry name" value="Dxr"/>
    <property type="match status" value="1"/>
</dbReference>
<dbReference type="NCBIfam" id="NF003938">
    <property type="entry name" value="PRK05447.1-1"/>
    <property type="match status" value="1"/>
</dbReference>
<dbReference type="NCBIfam" id="NF009114">
    <property type="entry name" value="PRK12464.1"/>
    <property type="match status" value="1"/>
</dbReference>
<dbReference type="PANTHER" id="PTHR30525">
    <property type="entry name" value="1-DEOXY-D-XYLULOSE 5-PHOSPHATE REDUCTOISOMERASE"/>
    <property type="match status" value="1"/>
</dbReference>
<dbReference type="PANTHER" id="PTHR30525:SF0">
    <property type="entry name" value="1-DEOXY-D-XYLULOSE 5-PHOSPHATE REDUCTOISOMERASE, CHLOROPLASTIC"/>
    <property type="match status" value="1"/>
</dbReference>
<dbReference type="Pfam" id="PF08436">
    <property type="entry name" value="DXP_redisom_C"/>
    <property type="match status" value="1"/>
</dbReference>
<dbReference type="Pfam" id="PF02670">
    <property type="entry name" value="DXP_reductoisom"/>
    <property type="match status" value="1"/>
</dbReference>
<dbReference type="Pfam" id="PF13288">
    <property type="entry name" value="DXPR_C"/>
    <property type="match status" value="1"/>
</dbReference>
<dbReference type="PIRSF" id="PIRSF006205">
    <property type="entry name" value="Dxp_reductismrs"/>
    <property type="match status" value="1"/>
</dbReference>
<dbReference type="SUPFAM" id="SSF69055">
    <property type="entry name" value="1-deoxy-D-xylulose-5-phosphate reductoisomerase, C-terminal domain"/>
    <property type="match status" value="1"/>
</dbReference>
<dbReference type="SUPFAM" id="SSF55347">
    <property type="entry name" value="Glyceraldehyde-3-phosphate dehydrogenase-like, C-terminal domain"/>
    <property type="match status" value="1"/>
</dbReference>
<dbReference type="SUPFAM" id="SSF51735">
    <property type="entry name" value="NAD(P)-binding Rossmann-fold domains"/>
    <property type="match status" value="1"/>
</dbReference>
<reference key="1">
    <citation type="submission" date="2006-08" db="EMBL/GenBank/DDBJ databases">
        <title>Complete sequence of Shewanella frigidimarina NCIMB 400.</title>
        <authorList>
            <consortium name="US DOE Joint Genome Institute"/>
            <person name="Copeland A."/>
            <person name="Lucas S."/>
            <person name="Lapidus A."/>
            <person name="Barry K."/>
            <person name="Detter J.C."/>
            <person name="Glavina del Rio T."/>
            <person name="Hammon N."/>
            <person name="Israni S."/>
            <person name="Dalin E."/>
            <person name="Tice H."/>
            <person name="Pitluck S."/>
            <person name="Fredrickson J.K."/>
            <person name="Kolker E."/>
            <person name="McCuel L.A."/>
            <person name="DiChristina T."/>
            <person name="Nealson K.H."/>
            <person name="Newman D."/>
            <person name="Tiedje J.M."/>
            <person name="Zhou J."/>
            <person name="Romine M.F."/>
            <person name="Culley D.E."/>
            <person name="Serres M."/>
            <person name="Chertkov O."/>
            <person name="Brettin T."/>
            <person name="Bruce D."/>
            <person name="Han C."/>
            <person name="Tapia R."/>
            <person name="Gilna P."/>
            <person name="Schmutz J."/>
            <person name="Larimer F."/>
            <person name="Land M."/>
            <person name="Hauser L."/>
            <person name="Kyrpides N."/>
            <person name="Mikhailova N."/>
            <person name="Richardson P."/>
        </authorList>
    </citation>
    <scope>NUCLEOTIDE SEQUENCE [LARGE SCALE GENOMIC DNA]</scope>
    <source>
        <strain>NCIMB 400</strain>
    </source>
</reference>
<sequence length="396" mass="42643">MQNMVILGATGSIGASTLSVMVNNPADFHVYGLVANASVQKMLALCITHQPEYAHMVDENAAMELKSLLPNHCVTQVTTGAEALNALVTDSRTDTVMAAIVGAAGLVPTFDAVKAGKRVLLANKEALVMSGELFMHTARASGATVLPVDSEHNAIFQCLPTNVQAQLGYCDLSANGISHILLTGSGGPFLNTDLATLSAMTPAQACNHPNWSMGPKISVDSATMMNKGLEFIEARWLFNTQAEQLKVVIHPQSVIHSMVQYRDGSVIAQMGNPDMRTPIAHCMSYPQRIGAGVEPLDFFKVGQLSFCEPDFDRFPCLRLAMQACEQGQEATTVLNAANEIAVDSFLKGRIRFTDIANVNYRCLDSVQQTRLDSIEDILQLDEQARATAVSVISTLN</sequence>
<protein>
    <recommendedName>
        <fullName evidence="1">1-deoxy-D-xylulose 5-phosphate reductoisomerase</fullName>
        <shortName evidence="1">DXP reductoisomerase</shortName>
        <ecNumber evidence="1">1.1.1.267</ecNumber>
    </recommendedName>
    <alternativeName>
        <fullName evidence="1">1-deoxyxylulose-5-phosphate reductoisomerase</fullName>
    </alternativeName>
    <alternativeName>
        <fullName evidence="1">2-C-methyl-D-erythritol 4-phosphate synthase</fullName>
    </alternativeName>
</protein>
<evidence type="ECO:0000255" key="1">
    <source>
        <dbReference type="HAMAP-Rule" id="MF_00183"/>
    </source>
</evidence>
<keyword id="KW-0414">Isoprene biosynthesis</keyword>
<keyword id="KW-0464">Manganese</keyword>
<keyword id="KW-0479">Metal-binding</keyword>
<keyword id="KW-0521">NADP</keyword>
<keyword id="KW-0560">Oxidoreductase</keyword>
<keyword id="KW-1185">Reference proteome</keyword>